<sequence>MPLYESVLIARNDVSQAQVETLVETIETLLKDNGGSIQKREFWGLRSLAYRIKKNRKGHYVLLGLDCTPDTLRELERQLGLNEDVLRVLTLRVDEIDENPSSVLARKSDDRGDRGNFRGGSKPAGRFESGRGGPRRSSEDREEYRARGEQDDARETAGAE</sequence>
<feature type="chain" id="PRO_0000229544" description="Small ribosomal subunit protein bS6">
    <location>
        <begin position="1"/>
        <end position="160"/>
    </location>
</feature>
<feature type="region of interest" description="Disordered" evidence="2">
    <location>
        <begin position="100"/>
        <end position="160"/>
    </location>
</feature>
<feature type="compositionally biased region" description="Basic and acidic residues" evidence="2">
    <location>
        <begin position="106"/>
        <end position="116"/>
    </location>
</feature>
<feature type="compositionally biased region" description="Basic and acidic residues" evidence="2">
    <location>
        <begin position="136"/>
        <end position="160"/>
    </location>
</feature>
<dbReference type="EMBL" id="CP000009">
    <property type="protein sequence ID" value="AAW60089.1"/>
    <property type="molecule type" value="Genomic_DNA"/>
</dbReference>
<dbReference type="RefSeq" id="WP_011251892.1">
    <property type="nucleotide sequence ID" value="NC_006677.1"/>
</dbReference>
<dbReference type="SMR" id="Q5FU57"/>
<dbReference type="STRING" id="290633.GOX0306"/>
<dbReference type="KEGG" id="gox:GOX0306"/>
<dbReference type="eggNOG" id="COG0360">
    <property type="taxonomic scope" value="Bacteria"/>
</dbReference>
<dbReference type="HOGENOM" id="CLU_113441_2_0_5"/>
<dbReference type="Proteomes" id="UP000006375">
    <property type="component" value="Chromosome"/>
</dbReference>
<dbReference type="GO" id="GO:0022627">
    <property type="term" value="C:cytosolic small ribosomal subunit"/>
    <property type="evidence" value="ECO:0007669"/>
    <property type="project" value="TreeGrafter"/>
</dbReference>
<dbReference type="GO" id="GO:0070181">
    <property type="term" value="F:small ribosomal subunit rRNA binding"/>
    <property type="evidence" value="ECO:0007669"/>
    <property type="project" value="TreeGrafter"/>
</dbReference>
<dbReference type="GO" id="GO:0003735">
    <property type="term" value="F:structural constituent of ribosome"/>
    <property type="evidence" value="ECO:0007669"/>
    <property type="project" value="InterPro"/>
</dbReference>
<dbReference type="GO" id="GO:0006412">
    <property type="term" value="P:translation"/>
    <property type="evidence" value="ECO:0007669"/>
    <property type="project" value="UniProtKB-UniRule"/>
</dbReference>
<dbReference type="CDD" id="cd00473">
    <property type="entry name" value="bS6"/>
    <property type="match status" value="1"/>
</dbReference>
<dbReference type="Gene3D" id="3.30.70.60">
    <property type="match status" value="1"/>
</dbReference>
<dbReference type="HAMAP" id="MF_00360">
    <property type="entry name" value="Ribosomal_bS6"/>
    <property type="match status" value="1"/>
</dbReference>
<dbReference type="InterPro" id="IPR000529">
    <property type="entry name" value="Ribosomal_bS6"/>
</dbReference>
<dbReference type="InterPro" id="IPR035980">
    <property type="entry name" value="Ribosomal_bS6_sf"/>
</dbReference>
<dbReference type="InterPro" id="IPR020814">
    <property type="entry name" value="Ribosomal_S6_plastid/chlpt"/>
</dbReference>
<dbReference type="InterPro" id="IPR014717">
    <property type="entry name" value="Transl_elong_EF1B/ribsomal_bS6"/>
</dbReference>
<dbReference type="NCBIfam" id="TIGR00166">
    <property type="entry name" value="S6"/>
    <property type="match status" value="1"/>
</dbReference>
<dbReference type="PANTHER" id="PTHR21011">
    <property type="entry name" value="MITOCHONDRIAL 28S RIBOSOMAL PROTEIN S6"/>
    <property type="match status" value="1"/>
</dbReference>
<dbReference type="PANTHER" id="PTHR21011:SF1">
    <property type="entry name" value="SMALL RIBOSOMAL SUBUNIT PROTEIN BS6M"/>
    <property type="match status" value="1"/>
</dbReference>
<dbReference type="Pfam" id="PF01250">
    <property type="entry name" value="Ribosomal_S6"/>
    <property type="match status" value="1"/>
</dbReference>
<dbReference type="SUPFAM" id="SSF54995">
    <property type="entry name" value="Ribosomal protein S6"/>
    <property type="match status" value="1"/>
</dbReference>
<reference key="1">
    <citation type="journal article" date="2005" name="Nat. Biotechnol.">
        <title>Complete genome sequence of the acetic acid bacterium Gluconobacter oxydans.</title>
        <authorList>
            <person name="Prust C."/>
            <person name="Hoffmeister M."/>
            <person name="Liesegang H."/>
            <person name="Wiezer A."/>
            <person name="Fricke W.F."/>
            <person name="Ehrenreich A."/>
            <person name="Gottschalk G."/>
            <person name="Deppenmeier U."/>
        </authorList>
    </citation>
    <scope>NUCLEOTIDE SEQUENCE [LARGE SCALE GENOMIC DNA]</scope>
    <source>
        <strain>621H</strain>
    </source>
</reference>
<protein>
    <recommendedName>
        <fullName evidence="1">Small ribosomal subunit protein bS6</fullName>
    </recommendedName>
    <alternativeName>
        <fullName evidence="3">30S ribosomal protein S6</fullName>
    </alternativeName>
</protein>
<evidence type="ECO:0000255" key="1">
    <source>
        <dbReference type="HAMAP-Rule" id="MF_00360"/>
    </source>
</evidence>
<evidence type="ECO:0000256" key="2">
    <source>
        <dbReference type="SAM" id="MobiDB-lite"/>
    </source>
</evidence>
<evidence type="ECO:0000305" key="3"/>
<comment type="function">
    <text evidence="1">Binds together with bS18 to 16S ribosomal RNA.</text>
</comment>
<comment type="similarity">
    <text evidence="1">Belongs to the bacterial ribosomal protein bS6 family.</text>
</comment>
<organism>
    <name type="scientific">Gluconobacter oxydans (strain 621H)</name>
    <name type="common">Gluconobacter suboxydans</name>
    <dbReference type="NCBI Taxonomy" id="290633"/>
    <lineage>
        <taxon>Bacteria</taxon>
        <taxon>Pseudomonadati</taxon>
        <taxon>Pseudomonadota</taxon>
        <taxon>Alphaproteobacteria</taxon>
        <taxon>Acetobacterales</taxon>
        <taxon>Acetobacteraceae</taxon>
        <taxon>Gluconobacter</taxon>
    </lineage>
</organism>
<proteinExistence type="inferred from homology"/>
<name>RS6_GLUOX</name>
<gene>
    <name evidence="1" type="primary">rpsF</name>
    <name type="ordered locus">GOX0306</name>
</gene>
<keyword id="KW-1185">Reference proteome</keyword>
<keyword id="KW-0687">Ribonucleoprotein</keyword>
<keyword id="KW-0689">Ribosomal protein</keyword>
<keyword id="KW-0694">RNA-binding</keyword>
<keyword id="KW-0699">rRNA-binding</keyword>
<accession>Q5FU57</accession>